<protein>
    <recommendedName>
        <fullName>Receptor-type tyrosine-protein phosphatase-like N</fullName>
        <shortName>R-PTP-N</shortName>
    </recommendedName>
    <alternativeName>
        <fullName>105 kDa islet cell antigen</fullName>
    </alternativeName>
    <alternativeName>
        <fullName>BEM-3</fullName>
    </alternativeName>
    <alternativeName>
        <fullName>Brain-enriched membrane-associated protein tyrosine phosphatase</fullName>
    </alternativeName>
    <alternativeName>
        <fullName evidence="17">ICA105</fullName>
    </alternativeName>
    <alternativeName>
        <fullName evidence="18">ICA512</fullName>
    </alternativeName>
    <alternativeName>
        <fullName evidence="17">PTP IA-2</fullName>
    </alternativeName>
    <alternativeName>
        <fullName>PTPLP</fullName>
    </alternativeName>
    <component>
        <recommendedName>
            <fullName>ICA512-N-terminal fragment</fullName>
            <shortName>ICA512-NTF</shortName>
        </recommendedName>
    </component>
    <component>
        <recommendedName>
            <fullName>ICA512-transmembrane fragment</fullName>
            <shortName>ICA512-TMF</shortName>
        </recommendedName>
    </component>
    <component>
        <recommendedName>
            <fullName>ICA512-cleaved cytosolic fragment</fullName>
            <shortName>ICA512-CCF</shortName>
        </recommendedName>
    </component>
</protein>
<comment type="function">
    <text evidence="4 5">Plays a role in vesicle-mediated secretory processes. Required for normal accumulation of secretory vesicles in hippocampus, pituitary and pancreatic islets. Required for the accumulation of normal levels of insulin-containing vesicles and preventing their degradation. Plays a role in insulin secretion in response to glucose stimuli. Required for normal accumulation of the neurotransmitters norepinephrine, dopamine and serotonin in the brain. In females, but not in males, required for normal accumulation and secretion of pituitary hormones, such as luteinizing hormone (LH) and follicle-stimulating hormone (FSH). Required to maintain normal levels of renin expression and renin release. Seems to lack intrinsic enzyme activity.</text>
</comment>
<comment type="function">
    <molecule>ICA512-transmembrane fragment</molecule>
    <text evidence="4">ICA512-TMF regulates dynamics and exocytosis of insulin secretory granules (SGs); binding of ICA512-TMF to SNTB2/beta-2-syntrophin is proposed to restrain SGs mobility and exocytosis by tethering them to the actin cytoskeleton depending on UTRN; the function is inhibited by cytoplasmic ICA512-CFF dimerizing with ICA512-TMF and displacing SNTB2 (By similarity).</text>
</comment>
<comment type="function">
    <molecule>ICA512-cleaved cytosolic fragment</molecule>
    <text evidence="4 12">ICA512-CCF translocated to the nucleus promotes expression of insulin and other granule-related genes; the function implicates binding to and regulating activity of STAT5B probably by preventing its dephosphorylation and potentially by inducing its sumoylation by recruiting PIAS4 (By similarity). Enhances pancreatic beta-cell proliferation by converging with signaling by STAT5B and STAT3 (PubMed:18178618). ICA512-CCF located in the cytoplasm regulates dynamics and exocytosis of insulin secretory granules (SGs) by dimerizing with ICA512-TMF and displacing SNTB2 thus enhancing SGs mobility and exocytosis (By similarity).</text>
</comment>
<comment type="subunit">
    <text evidence="4 5">Homodimer; shown for the unprocessed protein (proICA512) in the endoplasmic reticulum and resolved during protein maturation as ICA512-TMF seems to be predominantly monomeric in secretory granules; however, ICA512-CCF interacts with ICA512-TMF disrupting the ICA512-TMF:SNTB2 complex. The isolated lumenal RESP18 homology domain has been shown to form disulfide-linked homooligomers. Interacts (via cytoplasmic domain) with phosphorylated SNTB2; this protects PTPRN against cleavage by CAPN1 to produce ICA512-CCF. Dephosphorylation of SNTB2 upon insulin stimulation disrupts the interaction and results in PTPRN cleavage. Interacts with SNX19. ICA512-CCF interacts with PIAS4; in the nucleus. Interacts with STAT5B (phosphorylated); down-regulated by ICA512-CCF sumoylation; ICA512-CCF prevents STAT5B dephosphorylation; ICA512-CCF mediates interaction of STAT5B with PIAS4. Interacts (via RESP18 homology domain) with insulin and proinsulin. Interacts with PTPRN2, PTPRA and PTPRE.</text>
</comment>
<comment type="subcellular location">
    <subcellularLocation>
        <location evidence="20 21">Membrane</location>
        <topology evidence="19">Single-pass type I membrane protein</topology>
    </subcellularLocation>
    <subcellularLocation>
        <location evidence="10 16">Cytoplasmic vesicle</location>
        <location evidence="10 16">Secretory vesicle membrane</location>
        <topology evidence="19">Single-pass type I membrane protein</topology>
    </subcellularLocation>
    <subcellularLocation>
        <location evidence="16">Perikaryon</location>
    </subcellularLocation>
    <subcellularLocation>
        <location evidence="16">Cell projection</location>
        <location evidence="16">Axon</location>
    </subcellularLocation>
    <subcellularLocation>
        <location evidence="16">Synapse</location>
    </subcellularLocation>
    <subcellularLocation>
        <location evidence="16">Cell membrane</location>
        <topology evidence="19">Single-pass type I membrane protein</topology>
    </subcellularLocation>
    <subcellularLocation>
        <location evidence="16">Endosome</location>
    </subcellularLocation>
    <text evidence="16">Detected on neuronal secretory vesicles, but not on synaptic vesicles. Colocalizes with insulin-containing secretory granules. Primarily detected on secretory vesicle membranes. Transiently found at the cell membrane, when secretory vesicles fuse with the cell membrane to release their cargo. Is then endocytosed and recycled to secretory vesicles via the Golgi apparatus membranes.</text>
</comment>
<comment type="subcellular location">
    <molecule>ICA512-transmembrane fragment</molecule>
    <subcellularLocation>
        <location evidence="10 16">Cytoplasmic vesicle</location>
        <location evidence="10 16">Secretory vesicle membrane</location>
    </subcellularLocation>
</comment>
<comment type="subcellular location">
    <molecule>ICA512-cleaved cytosolic fragment</molecule>
    <subcellularLocation>
        <location evidence="4">Nucleus</location>
    </subcellularLocation>
</comment>
<comment type="tissue specificity">
    <text evidence="9 14 15 16">Detected in pancreas islets (PubMed:10457160, PubMed:7657822). Detected in pancreas alpha, beta and delta cells, and in chromaffin cells in the adrenal medulla (PubMed:8641276). Detected in amygdala, hypothalamus, autonomous nerve fibers and ganglia, especially at synaptic contacts (PubMed:8641276). Detected in pituitary (at protein level) (PubMed:10457160, PubMed:8641276). Detected in brain, specifically in cerebral cortex, diencephalon and brain stem (PubMed:7887886).</text>
</comment>
<comment type="domain">
    <text evidence="4">The RESP18 homology domain is sufficient for targeting proICA512 to secretory granules.</text>
</comment>
<comment type="PTM">
    <text evidence="2 11 13">Subject to proteolytic cleavage at multiple sites (PubMed:7568143). Subject to cleavage on a pair of basic residues (By similarity). Following exocytosis of secretory granules in pancreatic beta-cells ICA512-TMF located in the plasma-membrane is cleaved by mu-type calpain CPN1 to yield ICA512-CCF (PubMed:15596545).</text>
</comment>
<comment type="PTM">
    <text evidence="4">N-glycosylated.</text>
</comment>
<comment type="PTM">
    <text evidence="4">O-glycosylated.</text>
</comment>
<comment type="PTM">
    <text evidence="4">Sumoylated at two sites including Lys-758. Sumoylation decreases interaction with STAT5.</text>
</comment>
<comment type="similarity">
    <text evidence="19">Belongs to the protein-tyrosine phosphatase family. Receptor class 8 subfamily.</text>
</comment>
<comment type="caution">
    <text evidence="19">Does not possess catalytic activity due to replacement of highly conserved residues in tyrosine-protein phosphatase domain.</text>
</comment>
<comment type="sequence caution" evidence="19">
    <conflict type="frameshift">
        <sequence resource="EMBL-CDS" id="BAA07397"/>
    </conflict>
</comment>
<dbReference type="EMBL" id="X92563">
    <property type="protein sequence ID" value="CAA63313.1"/>
    <property type="molecule type" value="mRNA"/>
</dbReference>
<dbReference type="EMBL" id="D38222">
    <property type="protein sequence ID" value="BAA07397.1"/>
    <property type="status" value="ALT_FRAME"/>
    <property type="molecule type" value="mRNA"/>
</dbReference>
<dbReference type="EMBL" id="U40652">
    <property type="protein sequence ID" value="AAA83235.1"/>
    <property type="molecule type" value="mRNA"/>
</dbReference>
<dbReference type="EMBL" id="D45414">
    <property type="protein sequence ID" value="BAA08254.1"/>
    <property type="molecule type" value="mRNA"/>
</dbReference>
<dbReference type="PIR" id="S54342">
    <property type="entry name" value="S54342"/>
</dbReference>
<dbReference type="RefSeq" id="NP_446333.2">
    <property type="nucleotide sequence ID" value="NM_053881.2"/>
</dbReference>
<dbReference type="SMR" id="Q63259"/>
<dbReference type="BioGRID" id="250545">
    <property type="interactions" value="1"/>
</dbReference>
<dbReference type="FunCoup" id="Q63259">
    <property type="interactions" value="555"/>
</dbReference>
<dbReference type="IntAct" id="Q63259">
    <property type="interactions" value="2"/>
</dbReference>
<dbReference type="STRING" id="10116.ENSRNOP00000026654"/>
<dbReference type="GlyCosmos" id="Q63259">
    <property type="glycosylation" value="2 sites, No reported glycans"/>
</dbReference>
<dbReference type="GlyGen" id="Q63259">
    <property type="glycosylation" value="3 sites, 1 N-linked;o-linked glycan (1 site)"/>
</dbReference>
<dbReference type="iPTMnet" id="Q63259"/>
<dbReference type="PhosphoSitePlus" id="Q63259"/>
<dbReference type="jPOST" id="Q63259"/>
<dbReference type="PaxDb" id="10116-ENSRNOP00000026654"/>
<dbReference type="GeneID" id="116660"/>
<dbReference type="KEGG" id="rno:116660"/>
<dbReference type="UCSC" id="RGD:620777">
    <property type="organism name" value="rat"/>
</dbReference>
<dbReference type="AGR" id="RGD:620777"/>
<dbReference type="CTD" id="5798"/>
<dbReference type="RGD" id="620777">
    <property type="gene designation" value="Ptprn"/>
</dbReference>
<dbReference type="VEuPathDB" id="HostDB:ENSRNOG00000019587"/>
<dbReference type="eggNOG" id="KOG0793">
    <property type="taxonomic scope" value="Eukaryota"/>
</dbReference>
<dbReference type="HOGENOM" id="CLU_007905_2_0_1"/>
<dbReference type="InParanoid" id="Q63259"/>
<dbReference type="OrthoDB" id="9880441at2759"/>
<dbReference type="PhylomeDB" id="Q63259"/>
<dbReference type="TreeFam" id="TF351976"/>
<dbReference type="PRO" id="PR:Q63259"/>
<dbReference type="Proteomes" id="UP000002494">
    <property type="component" value="Chromosome 9"/>
</dbReference>
<dbReference type="Bgee" id="ENSRNOG00000019587">
    <property type="expression patterns" value="Expressed in frontal cortex and 15 other cell types or tissues"/>
</dbReference>
<dbReference type="GO" id="GO:0043679">
    <property type="term" value="C:axon terminus"/>
    <property type="evidence" value="ECO:0000314"/>
    <property type="project" value="UniProtKB"/>
</dbReference>
<dbReference type="GO" id="GO:0005768">
    <property type="term" value="C:endosome"/>
    <property type="evidence" value="ECO:0000314"/>
    <property type="project" value="UniProtKB"/>
</dbReference>
<dbReference type="GO" id="GO:0005794">
    <property type="term" value="C:Golgi apparatus"/>
    <property type="evidence" value="ECO:0000314"/>
    <property type="project" value="UniProtKB"/>
</dbReference>
<dbReference type="GO" id="GO:0043025">
    <property type="term" value="C:neuronal cell body"/>
    <property type="evidence" value="ECO:0000314"/>
    <property type="project" value="UniProtKB"/>
</dbReference>
<dbReference type="GO" id="GO:0099012">
    <property type="term" value="C:neuronal dense core vesicle membrane"/>
    <property type="evidence" value="ECO:0000314"/>
    <property type="project" value="SynGO"/>
</dbReference>
<dbReference type="GO" id="GO:0005634">
    <property type="term" value="C:nucleus"/>
    <property type="evidence" value="ECO:0000266"/>
    <property type="project" value="RGD"/>
</dbReference>
<dbReference type="GO" id="GO:0043204">
    <property type="term" value="C:perikaryon"/>
    <property type="evidence" value="ECO:0007669"/>
    <property type="project" value="UniProtKB-SubCell"/>
</dbReference>
<dbReference type="GO" id="GO:0005886">
    <property type="term" value="C:plasma membrane"/>
    <property type="evidence" value="ECO:0000314"/>
    <property type="project" value="UniProtKB"/>
</dbReference>
<dbReference type="GO" id="GO:0030141">
    <property type="term" value="C:secretory granule"/>
    <property type="evidence" value="ECO:0000314"/>
    <property type="project" value="UniProtKB"/>
</dbReference>
<dbReference type="GO" id="GO:0045202">
    <property type="term" value="C:synapse"/>
    <property type="evidence" value="ECO:0000314"/>
    <property type="project" value="UniProtKB"/>
</dbReference>
<dbReference type="GO" id="GO:0030658">
    <property type="term" value="C:transport vesicle membrane"/>
    <property type="evidence" value="ECO:0007669"/>
    <property type="project" value="UniProtKB-SubCell"/>
</dbReference>
<dbReference type="GO" id="GO:0051020">
    <property type="term" value="F:GTPase binding"/>
    <property type="evidence" value="ECO:0000353"/>
    <property type="project" value="RGD"/>
</dbReference>
<dbReference type="GO" id="GO:0030507">
    <property type="term" value="F:spectrin binding"/>
    <property type="evidence" value="ECO:0000266"/>
    <property type="project" value="RGD"/>
</dbReference>
<dbReference type="GO" id="GO:0044389">
    <property type="term" value="F:ubiquitin-like protein ligase binding"/>
    <property type="evidence" value="ECO:0000266"/>
    <property type="project" value="RGD"/>
</dbReference>
<dbReference type="GO" id="GO:1990502">
    <property type="term" value="P:dense core granule maturation"/>
    <property type="evidence" value="ECO:0000266"/>
    <property type="project" value="RGD"/>
</dbReference>
<dbReference type="GO" id="GO:0030073">
    <property type="term" value="P:insulin secretion"/>
    <property type="evidence" value="ECO:0000266"/>
    <property type="project" value="RGD"/>
</dbReference>
<dbReference type="GO" id="GO:0035773">
    <property type="term" value="P:insulin secretion involved in cellular response to glucose stimulus"/>
    <property type="evidence" value="ECO:0000250"/>
    <property type="project" value="UniProtKB"/>
</dbReference>
<dbReference type="GO" id="GO:0001553">
    <property type="term" value="P:luteinization"/>
    <property type="evidence" value="ECO:0000250"/>
    <property type="project" value="UniProtKB"/>
</dbReference>
<dbReference type="GO" id="GO:0045944">
    <property type="term" value="P:positive regulation of transcription by RNA polymerase II"/>
    <property type="evidence" value="ECO:0000266"/>
    <property type="project" value="RGD"/>
</dbReference>
<dbReference type="GO" id="GO:1904692">
    <property type="term" value="P:positive regulation of type B pancreatic cell proliferation"/>
    <property type="evidence" value="ECO:0000315"/>
    <property type="project" value="UniProtKB"/>
</dbReference>
<dbReference type="GO" id="GO:0051046">
    <property type="term" value="P:regulation of secretion"/>
    <property type="evidence" value="ECO:0000318"/>
    <property type="project" value="GO_Central"/>
</dbReference>
<dbReference type="GO" id="GO:0051591">
    <property type="term" value="P:response to cAMP"/>
    <property type="evidence" value="ECO:0000270"/>
    <property type="project" value="RGD"/>
</dbReference>
<dbReference type="GO" id="GO:0043627">
    <property type="term" value="P:response to estrogen"/>
    <property type="evidence" value="ECO:0000270"/>
    <property type="project" value="RGD"/>
</dbReference>
<dbReference type="GO" id="GO:0009749">
    <property type="term" value="P:response to glucose"/>
    <property type="evidence" value="ECO:0000270"/>
    <property type="project" value="RGD"/>
</dbReference>
<dbReference type="GO" id="GO:0032868">
    <property type="term" value="P:response to insulin"/>
    <property type="evidence" value="ECO:0000270"/>
    <property type="project" value="RGD"/>
</dbReference>
<dbReference type="GO" id="GO:0000302">
    <property type="term" value="P:response to reactive oxygen species"/>
    <property type="evidence" value="ECO:0000250"/>
    <property type="project" value="UniProtKB"/>
</dbReference>
<dbReference type="CDD" id="cd14609">
    <property type="entry name" value="R-PTP-N"/>
    <property type="match status" value="1"/>
</dbReference>
<dbReference type="FunFam" id="3.30.70.2470:FF:000001">
    <property type="entry name" value="receptor-type tyrosine-protein phosphatase-like N isoform X1"/>
    <property type="match status" value="1"/>
</dbReference>
<dbReference type="FunFam" id="3.90.190.10:FF:000017">
    <property type="entry name" value="receptor-type tyrosine-protein phosphatase-like N isoform X2"/>
    <property type="match status" value="1"/>
</dbReference>
<dbReference type="Gene3D" id="3.90.190.10">
    <property type="entry name" value="Protein tyrosine phosphatase superfamily"/>
    <property type="match status" value="1"/>
</dbReference>
<dbReference type="Gene3D" id="3.30.70.2470">
    <property type="entry name" value="Protein-tyrosine phosphatase receptor IA-2 ectodomain"/>
    <property type="match status" value="1"/>
</dbReference>
<dbReference type="InterPro" id="IPR033522">
    <property type="entry name" value="IA-2/IA-2_beta"/>
</dbReference>
<dbReference type="InterPro" id="IPR029021">
    <property type="entry name" value="Prot-tyrosine_phosphatase-like"/>
</dbReference>
<dbReference type="InterPro" id="IPR000242">
    <property type="entry name" value="PTP_cat"/>
</dbReference>
<dbReference type="InterPro" id="IPR021613">
    <property type="entry name" value="Receptor_IA-2_dom"/>
</dbReference>
<dbReference type="InterPro" id="IPR038112">
    <property type="entry name" value="Receptor_IA-2_ectodomain_sf"/>
</dbReference>
<dbReference type="InterPro" id="IPR029403">
    <property type="entry name" value="RESP18_dom"/>
</dbReference>
<dbReference type="InterPro" id="IPR016130">
    <property type="entry name" value="Tyr_Pase_AS"/>
</dbReference>
<dbReference type="InterPro" id="IPR003595">
    <property type="entry name" value="Tyr_Pase_cat"/>
</dbReference>
<dbReference type="InterPro" id="IPR000387">
    <property type="entry name" value="Tyr_Pase_dom"/>
</dbReference>
<dbReference type="PANTHER" id="PTHR46106">
    <property type="entry name" value="IA-2 PROTEIN TYROSINE PHOSPHATASE, ISOFORM C"/>
    <property type="match status" value="1"/>
</dbReference>
<dbReference type="PANTHER" id="PTHR46106:SF1">
    <property type="entry name" value="RECEPTOR-TYPE TYROSINE-PROTEIN PHOSPHATASE-LIKE N"/>
    <property type="match status" value="1"/>
</dbReference>
<dbReference type="Pfam" id="PF11548">
    <property type="entry name" value="Receptor_IA-2"/>
    <property type="match status" value="1"/>
</dbReference>
<dbReference type="Pfam" id="PF14948">
    <property type="entry name" value="RESP18"/>
    <property type="match status" value="1"/>
</dbReference>
<dbReference type="Pfam" id="PF00102">
    <property type="entry name" value="Y_phosphatase"/>
    <property type="match status" value="1"/>
</dbReference>
<dbReference type="PRINTS" id="PR00700">
    <property type="entry name" value="PRTYPHPHTASE"/>
</dbReference>
<dbReference type="SMART" id="SM00194">
    <property type="entry name" value="PTPc"/>
    <property type="match status" value="1"/>
</dbReference>
<dbReference type="SMART" id="SM00404">
    <property type="entry name" value="PTPc_motif"/>
    <property type="match status" value="1"/>
</dbReference>
<dbReference type="SMART" id="SM01305">
    <property type="entry name" value="RESP18"/>
    <property type="match status" value="1"/>
</dbReference>
<dbReference type="SUPFAM" id="SSF52799">
    <property type="entry name" value="(Phosphotyrosine protein) phosphatases II"/>
    <property type="match status" value="1"/>
</dbReference>
<dbReference type="PROSITE" id="PS00383">
    <property type="entry name" value="TYR_PHOSPHATASE_1"/>
    <property type="match status" value="1"/>
</dbReference>
<dbReference type="PROSITE" id="PS50056">
    <property type="entry name" value="TYR_PHOSPHATASE_2"/>
    <property type="match status" value="1"/>
</dbReference>
<dbReference type="PROSITE" id="PS50055">
    <property type="entry name" value="TYR_PHOSPHATASE_PTP"/>
    <property type="match status" value="1"/>
</dbReference>
<evidence type="ECO:0000250" key="1"/>
<evidence type="ECO:0000250" key="2">
    <source>
        <dbReference type="UniProtKB" id="P56722"/>
    </source>
</evidence>
<evidence type="ECO:0000250" key="3">
    <source>
        <dbReference type="UniProtKB" id="P80560"/>
    </source>
</evidence>
<evidence type="ECO:0000250" key="4">
    <source>
        <dbReference type="UniProtKB" id="Q16849"/>
    </source>
</evidence>
<evidence type="ECO:0000250" key="5">
    <source>
        <dbReference type="UniProtKB" id="Q60673"/>
    </source>
</evidence>
<evidence type="ECO:0000255" key="6"/>
<evidence type="ECO:0000255" key="7">
    <source>
        <dbReference type="PROSITE-ProRule" id="PRU00160"/>
    </source>
</evidence>
<evidence type="ECO:0000256" key="8">
    <source>
        <dbReference type="SAM" id="MobiDB-lite"/>
    </source>
</evidence>
<evidence type="ECO:0000269" key="9">
    <source>
    </source>
</evidence>
<evidence type="ECO:0000269" key="10">
    <source>
    </source>
</evidence>
<evidence type="ECO:0000269" key="11">
    <source>
    </source>
</evidence>
<evidence type="ECO:0000269" key="12">
    <source>
    </source>
</evidence>
<evidence type="ECO:0000269" key="13">
    <source>
    </source>
</evidence>
<evidence type="ECO:0000269" key="14">
    <source>
    </source>
</evidence>
<evidence type="ECO:0000269" key="15">
    <source>
    </source>
</evidence>
<evidence type="ECO:0000269" key="16">
    <source>
    </source>
</evidence>
<evidence type="ECO:0000303" key="17">
    <source>
    </source>
</evidence>
<evidence type="ECO:0000303" key="18">
    <source>
    </source>
</evidence>
<evidence type="ECO:0000305" key="19"/>
<evidence type="ECO:0000305" key="20">
    <source>
    </source>
</evidence>
<evidence type="ECO:0000305" key="21">
    <source>
    </source>
</evidence>
<evidence type="ECO:0007744" key="22">
    <source>
    </source>
</evidence>
<feature type="signal peptide" evidence="1">
    <location>
        <begin position="1"/>
        <end position="40"/>
    </location>
</feature>
<feature type="chain" id="PRO_0000025453" description="Receptor-type tyrosine-protein phosphatase-like N">
    <location>
        <begin position="41"/>
        <end position="983"/>
    </location>
</feature>
<feature type="chain" id="PRO_0000438085" description="ICA512-N-terminal fragment" evidence="2 4">
    <location>
        <begin position="41"/>
        <end position="452"/>
    </location>
</feature>
<feature type="chain" id="PRO_0000438086" description="ICA512-transmembrane fragment" evidence="2 4">
    <location>
        <begin position="453"/>
        <end position="983"/>
    </location>
</feature>
<feature type="chain" id="PRO_0000438087" description="ICA512-cleaved cytosolic fragment" evidence="4">
    <location>
        <begin position="663"/>
        <end position="983"/>
    </location>
</feature>
<feature type="topological domain" description="Lumenal" evidence="6">
    <location>
        <begin position="41"/>
        <end position="579"/>
    </location>
</feature>
<feature type="transmembrane region" description="Helical" evidence="6">
    <location>
        <begin position="580"/>
        <end position="604"/>
    </location>
</feature>
<feature type="topological domain" description="Cytoplasmic" evidence="6">
    <location>
        <begin position="605"/>
        <end position="983"/>
    </location>
</feature>
<feature type="domain" description="Tyrosine-protein phosphatase" evidence="7">
    <location>
        <begin position="713"/>
        <end position="973"/>
    </location>
</feature>
<feature type="region of interest" description="RESP18 homology domain" evidence="4">
    <location>
        <begin position="41"/>
        <end position="137"/>
    </location>
</feature>
<feature type="region of interest" description="Disordered" evidence="8">
    <location>
        <begin position="118"/>
        <end position="179"/>
    </location>
</feature>
<feature type="region of interest" description="Disordered" evidence="8">
    <location>
        <begin position="293"/>
        <end position="330"/>
    </location>
</feature>
<feature type="region of interest" description="Disordered" evidence="8">
    <location>
        <begin position="399"/>
        <end position="420"/>
    </location>
</feature>
<feature type="region of interest" description="Sufficient for dimerization of proICA512" evidence="4">
    <location>
        <begin position="453"/>
        <end position="579"/>
    </location>
</feature>
<feature type="region of interest" description="Sufficient for dimerization of proICA512" evidence="3">
    <location>
        <begin position="605"/>
        <end position="736"/>
    </location>
</feature>
<feature type="region of interest" description="Disordered" evidence="8">
    <location>
        <begin position="648"/>
        <end position="684"/>
    </location>
</feature>
<feature type="compositionally biased region" description="Basic and acidic residues" evidence="8">
    <location>
        <begin position="118"/>
        <end position="133"/>
    </location>
</feature>
<feature type="compositionally biased region" description="Polar residues" evidence="8">
    <location>
        <begin position="148"/>
        <end position="158"/>
    </location>
</feature>
<feature type="compositionally biased region" description="Basic and acidic residues" evidence="8">
    <location>
        <begin position="307"/>
        <end position="326"/>
    </location>
</feature>
<feature type="compositionally biased region" description="Low complexity" evidence="8">
    <location>
        <begin position="652"/>
        <end position="681"/>
    </location>
</feature>
<feature type="site" description="Cleavage" evidence="2">
    <location>
        <begin position="452"/>
        <end position="453"/>
    </location>
</feature>
<feature type="modified residue" description="Phosphoserine" evidence="22">
    <location>
        <position position="311"/>
    </location>
</feature>
<feature type="modified residue" description="Phosphoserine" evidence="22">
    <location>
        <position position="312"/>
    </location>
</feature>
<feature type="glycosylation site" description="N-linked (GlcNAc...) asparagine" evidence="6">
    <location>
        <position position="510"/>
    </location>
</feature>
<feature type="glycosylation site" description="N-linked (GlcNAc...) asparagine" evidence="6">
    <location>
        <position position="528"/>
    </location>
</feature>
<feature type="disulfide bond" description="Interchain (with C-46 or C-53); in multimeric form" evidence="4">
    <location>
        <position position="46"/>
    </location>
</feature>
<feature type="disulfide bond" description="Interchain (with C-46 or C-53); in multimeric form" evidence="4">
    <location>
        <position position="53"/>
    </location>
</feature>
<feature type="disulfide bond" evidence="4">
    <location>
        <begin position="59"/>
        <end position="68"/>
    </location>
</feature>
<feature type="cross-link" description="Glycyl lysine isopeptide (Lys-Gly) (interchain with G-Cter in SUMO)" evidence="4">
    <location>
        <position position="758"/>
    </location>
</feature>
<feature type="sequence conflict" description="In Ref. 3; AAA83235." evidence="19" ref="3">
    <original>P</original>
    <variation>T</variation>
    <location>
        <position position="466"/>
    </location>
</feature>
<feature type="sequence conflict" description="In Ref. 3; AAA83235." evidence="19" ref="3">
    <original>S</original>
    <variation>R</variation>
    <location>
        <position position="507"/>
    </location>
</feature>
<feature type="sequence conflict" description="In Ref. 3; AAA83235." evidence="19" ref="3">
    <original>A</original>
    <variation>V</variation>
    <location>
        <position position="517"/>
    </location>
</feature>
<feature type="sequence conflict" description="In Ref. 3; AAA83235." evidence="19" ref="3">
    <original>F</original>
    <variation>S</variation>
    <location>
        <position position="520"/>
    </location>
</feature>
<feature type="sequence conflict" description="In Ref. 3; AAA83235." evidence="19" ref="3">
    <original>S</original>
    <variation>A</variation>
    <location>
        <position position="564"/>
    </location>
</feature>
<feature type="sequence conflict" description="In Ref. 3; AAA83235." evidence="19" ref="3">
    <original>A</original>
    <variation>E</variation>
    <location>
        <position position="566"/>
    </location>
</feature>
<feature type="sequence conflict" description="In Ref. 2; BAA07397." evidence="19" ref="2">
    <original>G</original>
    <variation>R</variation>
    <location>
        <position position="574"/>
    </location>
</feature>
<feature type="sequence conflict" description="In Ref. 3; AAA83235." evidence="19" ref="3">
    <original>L</original>
    <variation>V</variation>
    <location>
        <position position="581"/>
    </location>
</feature>
<feature type="sequence conflict" description="In Ref. 4; BAA08254." evidence="19" ref="4">
    <original>A</original>
    <variation>V</variation>
    <location>
        <position position="599"/>
    </location>
</feature>
<feature type="sequence conflict" description="In Ref. 3; AAA83235." evidence="19" ref="3">
    <original>K</original>
    <variation>R</variation>
    <location>
        <position position="609"/>
    </location>
</feature>
<feature type="sequence conflict" description="In Ref. 3; AAA83235." evidence="19" ref="3">
    <original>Q</original>
    <variation>K</variation>
    <location>
        <position position="664"/>
    </location>
</feature>
<feature type="sequence conflict" description="In Ref. 3; AAA83235." evidence="19" ref="3">
    <original>S</original>
    <variation>N</variation>
    <location>
        <position position="672"/>
    </location>
</feature>
<feature type="sequence conflict" description="In Ref. 3; AAA83235." evidence="19" ref="3">
    <original>A</original>
    <variation>P</variation>
    <location>
        <position position="714"/>
    </location>
</feature>
<feature type="sequence conflict" description="In Ref. 1; CAA63313." evidence="19" ref="1">
    <original>E</original>
    <variation>K</variation>
    <location>
        <position position="716"/>
    </location>
</feature>
<feature type="sequence conflict" description="In Ref. 3; AAA83235." evidence="19" ref="3">
    <original>A</original>
    <variation>S</variation>
    <location>
        <position position="731"/>
    </location>
</feature>
<feature type="sequence conflict" description="In Ref. 3; AAA83235." evidence="19" ref="3">
    <original>RPG</original>
    <variation>PTC</variation>
    <location>
        <begin position="953"/>
        <end position="955"/>
    </location>
</feature>
<feature type="sequence conflict" description="In Ref. 3; AAA83235." evidence="19" ref="3">
    <original>Q</original>
    <variation>K</variation>
    <location>
        <position position="962"/>
    </location>
</feature>
<feature type="sequence conflict" description="In Ref. 3; AAA83235." evidence="19" ref="3">
    <original>A</original>
    <variation>P</variation>
    <location>
        <position position="966"/>
    </location>
</feature>
<feature type="sequence conflict" description="In Ref. 3; AAA83235." evidence="19" ref="3">
    <original>A</original>
    <variation>P</variation>
    <location>
        <position position="969"/>
    </location>
</feature>
<feature type="sequence conflict" description="In Ref. 3; AAA83235." evidence="19" ref="3">
    <original>A</original>
    <variation>G</variation>
    <location>
        <position position="971"/>
    </location>
</feature>
<feature type="sequence conflict" description="In Ref. 3; AAA83235." evidence="19" ref="3">
    <original>A</original>
    <variation>P</variation>
    <location>
        <position position="976"/>
    </location>
</feature>
<reference key="1">
    <citation type="journal article" date="1995" name="Proc. Natl. Acad. Sci. U.S.A.">
        <title>The 37/40-kilodalton autoantigen in insulin-dependent diabetes mellitus is the putative tyrosine phosphatase IA-2.</title>
        <authorList>
            <person name="Passini N."/>
            <person name="Larigan J.D."/>
            <person name="Genovese S."/>
            <person name="Appella E."/>
            <person name="Sinigaglia F."/>
            <person name="Rogge L."/>
        </authorList>
    </citation>
    <scope>NUCLEOTIDE SEQUENCE [MRNA]</scope>
    <scope>PROTEOLYTIC CLEAVAGE</scope>
    <scope>SUBCELLULAR LOCATION</scope>
</reference>
<reference key="2">
    <citation type="journal article" date="1995" name="Biochem. J.">
        <title>Cloning and expression of protein tyrosine phosphatase-like protein derived from a rat pheochromocytoma cell line.</title>
        <authorList>
            <person name="Kambayashi Y."/>
            <person name="Takahashi K."/>
            <person name="Bardhan S."/>
            <person name="Inagami T."/>
        </authorList>
    </citation>
    <scope>NUCLEOTIDE SEQUENCE [MRNA]</scope>
    <scope>TISSUE SPECIFICITY</scope>
</reference>
<reference key="3">
    <citation type="journal article" date="1995" name="J. Clin. Invest.">
        <title>Relationship of the 37,000- and 40,000-M(r) tryptic fragments of islet antigens in insulin-dependent diabetes to the protein tyrosine phosphatase-like molecule IA-2 (ICA512).</title>
        <authorList>
            <person name="Payton M.A."/>
            <person name="Hawkes C.J."/>
            <person name="Christie M.R."/>
        </authorList>
    </citation>
    <scope>NUCLEOTIDE SEQUENCE [MRNA] OF 13-983</scope>
    <scope>SUBCELLULAR LOCATION</scope>
    <scope>TISSUE SPECIFICITY</scope>
    <source>
        <strain>Sprague-Dawley</strain>
        <tissue>Brain</tissue>
    </source>
</reference>
<reference key="4">
    <citation type="submission" date="1995-02" db="EMBL/GenBank/DDBJ databases">
        <authorList>
            <person name="Itoh S."/>
            <person name="Okada M."/>
            <person name="Nakagawa H."/>
        </authorList>
    </citation>
    <scope>NUCLEOTIDE SEQUENCE [MRNA] OF 396-983</scope>
    <source>
        <strain>Wistar</strain>
        <tissue>Brain</tissue>
    </source>
</reference>
<reference key="5">
    <citation type="journal article" date="1996" name="EMBO J.">
        <title>ICA 512, an autoantigen of type I diabetes, is an intrinsic membrane protein of neurosecretory granules.</title>
        <authorList>
            <person name="Solimena M."/>
            <person name="Dirkx R. Jr."/>
            <person name="Hermel J.-M."/>
            <person name="Pleasic-Williams S."/>
            <person name="Shapiro J.A."/>
            <person name="Caron L."/>
            <person name="Rabin D.U."/>
        </authorList>
    </citation>
    <scope>SUBCELLULAR LOCATION</scope>
    <scope>TISSUE SPECIFICITY</scope>
</reference>
<reference key="6">
    <citation type="journal article" date="1999" name="Eur. J. Neurosci.">
        <title>Post-translational modifications of ICA512, a receptor tyrosine phosphatase-like protein of secretory granules.</title>
        <authorList>
            <person name="Hermel J.-M."/>
            <person name="Dirkx R."/>
            <person name="Solimena M."/>
        </authorList>
    </citation>
    <scope>TISSUE SPECIFICITY</scope>
</reference>
<reference key="7">
    <citation type="journal article" date="2001" name="EMBO J.">
        <title>Dephosphorylation of beta2-syntrophin and Ca2+/mu-calpain-mediated cleavage of ICA512 upon stimulation of insulin secretion.</title>
        <authorList>
            <person name="Ort T."/>
            <person name="Voronov S."/>
            <person name="Guo J."/>
            <person name="Zawalich K."/>
            <person name="Froehner S.C."/>
            <person name="Zawalich W."/>
            <person name="Solimena M."/>
        </authorList>
    </citation>
    <scope>SUBCELLULAR LOCATION</scope>
</reference>
<reference key="8">
    <citation type="journal article" date="2004" name="J. Cell Biol.">
        <title>Nuclear translocation of an ICA512 cytosolic fragment couples granule exocytosis and insulin expression in {beta}-cells.</title>
        <authorList>
            <person name="Trajkovski M."/>
            <person name="Mziaut H."/>
            <person name="Altkrueger A."/>
            <person name="Ouwendijk J."/>
            <person name="Knoch K.P."/>
            <person name="Mueller S."/>
            <person name="Solimena M."/>
        </authorList>
    </citation>
    <scope>PROTEOLYTIC CLEAVAGE</scope>
</reference>
<reference key="9">
    <citation type="journal article" date="2008" name="Proc. Natl. Acad. Sci. U.S.A.">
        <title>ICA512 signaling enhances pancreatic beta-cell proliferation by regulating cyclins D through STATs.</title>
        <authorList>
            <person name="Mziaut H."/>
            <person name="Kersting S."/>
            <person name="Knoch K.P."/>
            <person name="Fan W.H."/>
            <person name="Trajkovski M."/>
            <person name="Erdmann K."/>
            <person name="Bergert H."/>
            <person name="Ehehalt F."/>
            <person name="Saeger H.D."/>
            <person name="Solimena M."/>
        </authorList>
    </citation>
    <scope>FUNCTION</scope>
</reference>
<reference key="10">
    <citation type="journal article" date="2012" name="Nat. Commun.">
        <title>Quantitative maps of protein phosphorylation sites across 14 different rat organs and tissues.</title>
        <authorList>
            <person name="Lundby A."/>
            <person name="Secher A."/>
            <person name="Lage K."/>
            <person name="Nordsborg N.B."/>
            <person name="Dmytriyev A."/>
            <person name="Lundby C."/>
            <person name="Olsen J.V."/>
        </authorList>
    </citation>
    <scope>PHOSPHORYLATION [LARGE SCALE ANALYSIS] AT SER-311 AND SER-312</scope>
    <scope>IDENTIFICATION BY MASS SPECTROMETRY [LARGE SCALE ANALYSIS]</scope>
</reference>
<sequence>MRRPRRPGGPAGCGGSEGSGGLRLLVCLLLLSGRPGGCSAISAHGCLFDRRLCSHLEVCIQDGLFGQCQAGVGQARPLLQVTSPVLQRLQGVLRQLMSQGLSWHDDLTQYVISQEMERIPRLRPPEPHPRDRSGSVPRRAGPAGELLSQGNPTGSSPAVQGLSRPPGDGNGAGVGSPLSSLQAELLPPLLEHLLMPPQPPHPSLTYEPALLQPYLFQQFGSRDGSRGSESASGVVGHLAKAEDPVLFSRSLSKAILGTHSGHSFGDLTGPSPAQLFQDSGLLYMAQELPVPGRARAPRLPEEGGSSRAEDSSEGHEEEVLGGHGEKSPPQAVQADVSLQRLAAVLAGYGVELRQLTPEQLSTLLTLLQLLPKGTGRHLGGAVNGGADVKKTIEEQMQRGDTADARPPTPLLPGHPTASSTSIKVRQVLSPGFPEPPKTSSPLGISAVLLEKKSPLGQSQPTVVGQPSARPSAEEYGYIVTDQKPLSLVAGVKLLEILAEHVHMTSGSFINISVVGPAVTFRIRHNEQNLSLADVTQQAGLVKSELEAQTGLQILQTGVGQREESAAVLPRQAHGISPMRSLLLTLVALAGVAGLLVALAVALCMRHHSKQRDKERLAALGPEGAHGDTTFEYQDLCRQHMATKSLFNRAEGQPEPSRVSSVSSQFSDAAQASPSSHSSTPSWCEEPAQANMDISTGHMILAYMEDHLRNRDRLAKEWQALCAYQAEPNTCATAQGEGNIKKNRHPDFLPYDHARIKLKVESSPSRSDYINASPIIEHDPRMPAYIATQGPLSHTIADFWQMVWESGCTVIVMLTPLVEDGVKQCDRYWPDEGSSLYHVYEVNLVSEHIWCEDFLVRSFYLKNVQTQETRTLTQFHFLSWPAEGTPASTRPLLDFRRKVNKCYRGRSCPIIVHCSDGAGRTGTYILIDMVLNRMAKGVKEIDIAATLEHVRDQRPGLVRSKDQFEFALTAVAEEVNAILKALPQ</sequence>
<keyword id="KW-1003">Cell membrane</keyword>
<keyword id="KW-0966">Cell projection</keyword>
<keyword id="KW-0968">Cytoplasmic vesicle</keyword>
<keyword id="KW-1015">Disulfide bond</keyword>
<keyword id="KW-0967">Endosome</keyword>
<keyword id="KW-0325">Glycoprotein</keyword>
<keyword id="KW-1017">Isopeptide bond</keyword>
<keyword id="KW-0472">Membrane</keyword>
<keyword id="KW-0539">Nucleus</keyword>
<keyword id="KW-0597">Phosphoprotein</keyword>
<keyword id="KW-0675">Receptor</keyword>
<keyword id="KW-1185">Reference proteome</keyword>
<keyword id="KW-0732">Signal</keyword>
<keyword id="KW-0770">Synapse</keyword>
<keyword id="KW-0804">Transcription</keyword>
<keyword id="KW-0805">Transcription regulation</keyword>
<keyword id="KW-0812">Transmembrane</keyword>
<keyword id="KW-1133">Transmembrane helix</keyword>
<keyword id="KW-0832">Ubl conjugation</keyword>
<proteinExistence type="evidence at protein level"/>
<organism>
    <name type="scientific">Rattus norvegicus</name>
    <name type="common">Rat</name>
    <dbReference type="NCBI Taxonomy" id="10116"/>
    <lineage>
        <taxon>Eukaryota</taxon>
        <taxon>Metazoa</taxon>
        <taxon>Chordata</taxon>
        <taxon>Craniata</taxon>
        <taxon>Vertebrata</taxon>
        <taxon>Euteleostomi</taxon>
        <taxon>Mammalia</taxon>
        <taxon>Eutheria</taxon>
        <taxon>Euarchontoglires</taxon>
        <taxon>Glires</taxon>
        <taxon>Rodentia</taxon>
        <taxon>Myomorpha</taxon>
        <taxon>Muroidea</taxon>
        <taxon>Muridae</taxon>
        <taxon>Murinae</taxon>
        <taxon>Rattus</taxon>
    </lineage>
</organism>
<accession>Q63259</accession>
<accession>Q62883</accession>
<accession>Q63795</accession>
<accession>Q64643</accession>
<gene>
    <name type="primary">Ptprn</name>
</gene>
<name>PTPRN_RAT</name>